<protein>
    <recommendedName>
        <fullName evidence="1">Large ribosomal subunit protein uL6</fullName>
    </recommendedName>
    <alternativeName>
        <fullName evidence="2">50S ribosomal protein L6</fullName>
    </alternativeName>
</protein>
<reference key="1">
    <citation type="submission" date="2008-06" db="EMBL/GenBank/DDBJ databases">
        <title>Lactobacillus casei BL23 complete genome sequence.</title>
        <authorList>
            <person name="Maze A."/>
            <person name="Boel G."/>
            <person name="Bourand A."/>
            <person name="Loux V."/>
            <person name="Gibrat J.F."/>
            <person name="Zuniga M."/>
            <person name="Hartke A."/>
            <person name="Deutscher J."/>
        </authorList>
    </citation>
    <scope>NUCLEOTIDE SEQUENCE [LARGE SCALE GENOMIC DNA]</scope>
    <source>
        <strain>BL23</strain>
    </source>
</reference>
<feature type="chain" id="PRO_1000144005" description="Large ribosomal subunit protein uL6">
    <location>
        <begin position="1"/>
        <end position="176"/>
    </location>
</feature>
<accession>B3WAK3</accession>
<name>RL6_LACCB</name>
<sequence>MSRIGYKVIKVPAGVTITKDGDNITVKGPKGELTRHFAPEIEMHQEGDEINFTRPDDSYKAVHGTMRANLNNMVVGVTEGYKKEMKLVGVGYRAQKQGEKLVLNVGYSHPVEMTAPKGVTVEVPSTTQIIISGISKQVVGQFAAVVRSVRAPEPYKGKGIRYVDEHVRRKEGKTGK</sequence>
<organism>
    <name type="scientific">Lacticaseibacillus casei (strain BL23)</name>
    <name type="common">Lactobacillus casei</name>
    <dbReference type="NCBI Taxonomy" id="543734"/>
    <lineage>
        <taxon>Bacteria</taxon>
        <taxon>Bacillati</taxon>
        <taxon>Bacillota</taxon>
        <taxon>Bacilli</taxon>
        <taxon>Lactobacillales</taxon>
        <taxon>Lactobacillaceae</taxon>
        <taxon>Lacticaseibacillus</taxon>
    </lineage>
</organism>
<gene>
    <name evidence="1" type="primary">rplF</name>
    <name type="ordered locus">LCABL_26560</name>
</gene>
<proteinExistence type="inferred from homology"/>
<evidence type="ECO:0000255" key="1">
    <source>
        <dbReference type="HAMAP-Rule" id="MF_01365"/>
    </source>
</evidence>
<evidence type="ECO:0000305" key="2"/>
<dbReference type="EMBL" id="FM177140">
    <property type="protein sequence ID" value="CAQ67722.1"/>
    <property type="molecule type" value="Genomic_DNA"/>
</dbReference>
<dbReference type="SMR" id="B3WAK3"/>
<dbReference type="KEGG" id="lcb:LCABL_26560"/>
<dbReference type="HOGENOM" id="CLU_065464_1_2_9"/>
<dbReference type="GO" id="GO:0022625">
    <property type="term" value="C:cytosolic large ribosomal subunit"/>
    <property type="evidence" value="ECO:0007669"/>
    <property type="project" value="TreeGrafter"/>
</dbReference>
<dbReference type="GO" id="GO:0019843">
    <property type="term" value="F:rRNA binding"/>
    <property type="evidence" value="ECO:0007669"/>
    <property type="project" value="UniProtKB-UniRule"/>
</dbReference>
<dbReference type="GO" id="GO:0003735">
    <property type="term" value="F:structural constituent of ribosome"/>
    <property type="evidence" value="ECO:0007669"/>
    <property type="project" value="InterPro"/>
</dbReference>
<dbReference type="GO" id="GO:0002181">
    <property type="term" value="P:cytoplasmic translation"/>
    <property type="evidence" value="ECO:0007669"/>
    <property type="project" value="TreeGrafter"/>
</dbReference>
<dbReference type="FunFam" id="3.90.930.12:FF:000001">
    <property type="entry name" value="50S ribosomal protein L6"/>
    <property type="match status" value="1"/>
</dbReference>
<dbReference type="FunFam" id="3.90.930.12:FF:000002">
    <property type="entry name" value="50S ribosomal protein L6"/>
    <property type="match status" value="1"/>
</dbReference>
<dbReference type="Gene3D" id="3.90.930.12">
    <property type="entry name" value="Ribosomal protein L6, alpha-beta domain"/>
    <property type="match status" value="2"/>
</dbReference>
<dbReference type="HAMAP" id="MF_01365_B">
    <property type="entry name" value="Ribosomal_uL6_B"/>
    <property type="match status" value="1"/>
</dbReference>
<dbReference type="InterPro" id="IPR000702">
    <property type="entry name" value="Ribosomal_uL6-like"/>
</dbReference>
<dbReference type="InterPro" id="IPR036789">
    <property type="entry name" value="Ribosomal_uL6-like_a/b-dom_sf"/>
</dbReference>
<dbReference type="InterPro" id="IPR020040">
    <property type="entry name" value="Ribosomal_uL6_a/b-dom"/>
</dbReference>
<dbReference type="InterPro" id="IPR019906">
    <property type="entry name" value="Ribosomal_uL6_bac-type"/>
</dbReference>
<dbReference type="InterPro" id="IPR002358">
    <property type="entry name" value="Ribosomal_uL6_CS"/>
</dbReference>
<dbReference type="NCBIfam" id="TIGR03654">
    <property type="entry name" value="L6_bact"/>
    <property type="match status" value="1"/>
</dbReference>
<dbReference type="PANTHER" id="PTHR11655">
    <property type="entry name" value="60S/50S RIBOSOMAL PROTEIN L6/L9"/>
    <property type="match status" value="1"/>
</dbReference>
<dbReference type="PANTHER" id="PTHR11655:SF14">
    <property type="entry name" value="LARGE RIBOSOMAL SUBUNIT PROTEIN UL6M"/>
    <property type="match status" value="1"/>
</dbReference>
<dbReference type="Pfam" id="PF00347">
    <property type="entry name" value="Ribosomal_L6"/>
    <property type="match status" value="2"/>
</dbReference>
<dbReference type="PIRSF" id="PIRSF002162">
    <property type="entry name" value="Ribosomal_L6"/>
    <property type="match status" value="1"/>
</dbReference>
<dbReference type="PRINTS" id="PR00059">
    <property type="entry name" value="RIBOSOMALL6"/>
</dbReference>
<dbReference type="SUPFAM" id="SSF56053">
    <property type="entry name" value="Ribosomal protein L6"/>
    <property type="match status" value="2"/>
</dbReference>
<dbReference type="PROSITE" id="PS00525">
    <property type="entry name" value="RIBOSOMAL_L6_1"/>
    <property type="match status" value="1"/>
</dbReference>
<keyword id="KW-0687">Ribonucleoprotein</keyword>
<keyword id="KW-0689">Ribosomal protein</keyword>
<keyword id="KW-0694">RNA-binding</keyword>
<keyword id="KW-0699">rRNA-binding</keyword>
<comment type="function">
    <text evidence="1">This protein binds to the 23S rRNA, and is important in its secondary structure. It is located near the subunit interface in the base of the L7/L12 stalk, and near the tRNA binding site of the peptidyltransferase center.</text>
</comment>
<comment type="subunit">
    <text evidence="1">Part of the 50S ribosomal subunit.</text>
</comment>
<comment type="similarity">
    <text evidence="1">Belongs to the universal ribosomal protein uL6 family.</text>
</comment>